<keyword id="KW-1003">Cell membrane</keyword>
<keyword id="KW-0210">Decarboxylase</keyword>
<keyword id="KW-0444">Lipid biosynthesis</keyword>
<keyword id="KW-0443">Lipid metabolism</keyword>
<keyword id="KW-0456">Lyase</keyword>
<keyword id="KW-0472">Membrane</keyword>
<keyword id="KW-0594">Phospholipid biosynthesis</keyword>
<keyword id="KW-1208">Phospholipid metabolism</keyword>
<keyword id="KW-0670">Pyruvate</keyword>
<keyword id="KW-0865">Zymogen</keyword>
<gene>
    <name evidence="1" type="primary">psd</name>
    <name type="ordered locus">BT9727_4073</name>
</gene>
<proteinExistence type="inferred from homology"/>
<feature type="chain" id="PRO_0000029629" description="Phosphatidylserine decarboxylase beta chain" evidence="1">
    <location>
        <begin position="1"/>
        <end position="225"/>
    </location>
</feature>
<feature type="chain" id="PRO_0000029630" description="Phosphatidylserine decarboxylase alpha chain" evidence="1">
    <location>
        <begin position="226"/>
        <end position="262"/>
    </location>
</feature>
<feature type="active site" description="Charge relay system; for autoendoproteolytic cleavage activity" evidence="1">
    <location>
        <position position="86"/>
    </location>
</feature>
<feature type="active site" description="Charge relay system; for autoendoproteolytic cleavage activity" evidence="1">
    <location>
        <position position="142"/>
    </location>
</feature>
<feature type="active site" description="Charge relay system; for autoendoproteolytic cleavage activity" evidence="1">
    <location>
        <position position="226"/>
    </location>
</feature>
<feature type="active site" description="Schiff-base intermediate with substrate; via pyruvic acid; for decarboxylase activity" evidence="1">
    <location>
        <position position="226"/>
    </location>
</feature>
<feature type="site" description="Cleavage (non-hydrolytic); by autocatalysis" evidence="1">
    <location>
        <begin position="225"/>
        <end position="226"/>
    </location>
</feature>
<feature type="modified residue" description="Pyruvic acid (Ser); by autocatalysis" evidence="1">
    <location>
        <position position="226"/>
    </location>
</feature>
<name>PSD_BACHK</name>
<comment type="function">
    <text evidence="1">Catalyzes the formation of phosphatidylethanolamine (PtdEtn) from phosphatidylserine (PtdSer).</text>
</comment>
<comment type="catalytic activity">
    <reaction evidence="1">
        <text>a 1,2-diacyl-sn-glycero-3-phospho-L-serine + H(+) = a 1,2-diacyl-sn-glycero-3-phosphoethanolamine + CO2</text>
        <dbReference type="Rhea" id="RHEA:20828"/>
        <dbReference type="ChEBI" id="CHEBI:15378"/>
        <dbReference type="ChEBI" id="CHEBI:16526"/>
        <dbReference type="ChEBI" id="CHEBI:57262"/>
        <dbReference type="ChEBI" id="CHEBI:64612"/>
        <dbReference type="EC" id="4.1.1.65"/>
    </reaction>
</comment>
<comment type="cofactor">
    <cofactor evidence="1">
        <name>pyruvate</name>
        <dbReference type="ChEBI" id="CHEBI:15361"/>
    </cofactor>
    <text evidence="1">Binds 1 pyruvoyl group covalently per subunit.</text>
</comment>
<comment type="pathway">
    <text evidence="1">Phospholipid metabolism; phosphatidylethanolamine biosynthesis; phosphatidylethanolamine from CDP-diacylglycerol: step 2/2.</text>
</comment>
<comment type="subunit">
    <text evidence="1">Heterodimer of a large membrane-associated beta subunit and a small pyruvoyl-containing alpha subunit.</text>
</comment>
<comment type="subcellular location">
    <subcellularLocation>
        <location evidence="1">Cell membrane</location>
        <topology evidence="1">Peripheral membrane protein</topology>
    </subcellularLocation>
</comment>
<comment type="PTM">
    <text evidence="1">Is synthesized initially as an inactive proenzyme. Formation of the active enzyme involves a self-maturation process in which the active site pyruvoyl group is generated from an internal serine residue via an autocatalytic post-translational modification. Two non-identical subunits are generated from the proenzyme in this reaction, and the pyruvate is formed at the N-terminus of the alpha chain, which is derived from the carboxyl end of the proenzyme. The autoendoproteolytic cleavage occurs by a canonical serine protease mechanism, in which the side chain hydroxyl group of the serine supplies its oxygen atom to form the C-terminus of the beta chain, while the remainder of the serine residue undergoes an oxidative deamination to produce ammonia and the pyruvoyl prosthetic group on the alpha chain. During this reaction, the Ser that is part of the protease active site of the proenzyme becomes the pyruvoyl prosthetic group, which constitutes an essential element of the active site of the mature decarboxylase.</text>
</comment>
<comment type="similarity">
    <text evidence="1">Belongs to the phosphatidylserine decarboxylase family. PSD-B subfamily. Prokaryotic type I sub-subfamily.</text>
</comment>
<organism>
    <name type="scientific">Bacillus thuringiensis subsp. konkukian (strain 97-27)</name>
    <dbReference type="NCBI Taxonomy" id="281309"/>
    <lineage>
        <taxon>Bacteria</taxon>
        <taxon>Bacillati</taxon>
        <taxon>Bacillota</taxon>
        <taxon>Bacilli</taxon>
        <taxon>Bacillales</taxon>
        <taxon>Bacillaceae</taxon>
        <taxon>Bacillus</taxon>
        <taxon>Bacillus cereus group</taxon>
    </lineage>
</organism>
<protein>
    <recommendedName>
        <fullName evidence="1">Phosphatidylserine decarboxylase proenzyme</fullName>
        <ecNumber evidence="1">4.1.1.65</ecNumber>
    </recommendedName>
    <component>
        <recommendedName>
            <fullName evidence="1">Phosphatidylserine decarboxylase alpha chain</fullName>
        </recommendedName>
    </component>
    <component>
        <recommendedName>
            <fullName evidence="1">Phosphatidylserine decarboxylase beta chain</fullName>
        </recommendedName>
    </component>
</protein>
<reference key="1">
    <citation type="journal article" date="2006" name="J. Bacteriol.">
        <title>Pathogenomic sequence analysis of Bacillus cereus and Bacillus thuringiensis isolates closely related to Bacillus anthracis.</title>
        <authorList>
            <person name="Han C.S."/>
            <person name="Xie G."/>
            <person name="Challacombe J.F."/>
            <person name="Altherr M.R."/>
            <person name="Bhotika S.S."/>
            <person name="Bruce D."/>
            <person name="Campbell C.S."/>
            <person name="Campbell M.L."/>
            <person name="Chen J."/>
            <person name="Chertkov O."/>
            <person name="Cleland C."/>
            <person name="Dimitrijevic M."/>
            <person name="Doggett N.A."/>
            <person name="Fawcett J.J."/>
            <person name="Glavina T."/>
            <person name="Goodwin L.A."/>
            <person name="Hill K.K."/>
            <person name="Hitchcock P."/>
            <person name="Jackson P.J."/>
            <person name="Keim P."/>
            <person name="Kewalramani A.R."/>
            <person name="Longmire J."/>
            <person name="Lucas S."/>
            <person name="Malfatti S."/>
            <person name="McMurry K."/>
            <person name="Meincke L.J."/>
            <person name="Misra M."/>
            <person name="Moseman B.L."/>
            <person name="Mundt M."/>
            <person name="Munk A.C."/>
            <person name="Okinaka R.T."/>
            <person name="Parson-Quintana B."/>
            <person name="Reilly L.P."/>
            <person name="Richardson P."/>
            <person name="Robinson D.L."/>
            <person name="Rubin E."/>
            <person name="Saunders E."/>
            <person name="Tapia R."/>
            <person name="Tesmer J.G."/>
            <person name="Thayer N."/>
            <person name="Thompson L.S."/>
            <person name="Tice H."/>
            <person name="Ticknor L.O."/>
            <person name="Wills P.L."/>
            <person name="Brettin T.S."/>
            <person name="Gilna P."/>
        </authorList>
    </citation>
    <scope>NUCLEOTIDE SEQUENCE [LARGE SCALE GENOMIC DNA]</scope>
    <source>
        <strain>97-27</strain>
    </source>
</reference>
<evidence type="ECO:0000255" key="1">
    <source>
        <dbReference type="HAMAP-Rule" id="MF_00662"/>
    </source>
</evidence>
<accession>Q6HDI5</accession>
<sequence length="262" mass="29942">MRRTLYRLMIELTNGRFTSYILRKFAQSRLSSIIIPSYVKVFQINQDEMEKGLKEYRTLHELFTRKLKEGKRSIDTDASSIVSPVDGVFADYGPIEDAKTFDIKGKRYSIVDMLGNEERAQRYAGGTYMVIYLSPSHYHRIHSPLSGSVTERFVLGRKSYPVNAAGMEYGKEPLSKNYRSVTEVNSDGEHMALVKVGAMFVNSIELLHERDTVQKGEEMAYFTFGSTVVLLFEKDMIEVVQELKSGQELRLGEKIATRLAHK</sequence>
<dbReference type="EC" id="4.1.1.65" evidence="1"/>
<dbReference type="EMBL" id="AE017355">
    <property type="protein sequence ID" value="AAT63599.1"/>
    <property type="molecule type" value="Genomic_DNA"/>
</dbReference>
<dbReference type="RefSeq" id="WP_001255010.1">
    <property type="nucleotide sequence ID" value="NC_005957.1"/>
</dbReference>
<dbReference type="RefSeq" id="YP_038391.1">
    <property type="nucleotide sequence ID" value="NC_005957.1"/>
</dbReference>
<dbReference type="SMR" id="Q6HDI5"/>
<dbReference type="KEGG" id="btk:BT9727_4073"/>
<dbReference type="PATRIC" id="fig|281309.8.peg.4347"/>
<dbReference type="HOGENOM" id="CLU_029061_4_0_9"/>
<dbReference type="UniPathway" id="UPA00558">
    <property type="reaction ID" value="UER00616"/>
</dbReference>
<dbReference type="Proteomes" id="UP000001301">
    <property type="component" value="Chromosome"/>
</dbReference>
<dbReference type="GO" id="GO:0005886">
    <property type="term" value="C:plasma membrane"/>
    <property type="evidence" value="ECO:0007669"/>
    <property type="project" value="UniProtKB-SubCell"/>
</dbReference>
<dbReference type="GO" id="GO:0004609">
    <property type="term" value="F:phosphatidylserine decarboxylase activity"/>
    <property type="evidence" value="ECO:0007669"/>
    <property type="project" value="UniProtKB-UniRule"/>
</dbReference>
<dbReference type="GO" id="GO:0006646">
    <property type="term" value="P:phosphatidylethanolamine biosynthetic process"/>
    <property type="evidence" value="ECO:0007669"/>
    <property type="project" value="UniProtKB-UniRule"/>
</dbReference>
<dbReference type="HAMAP" id="MF_00662">
    <property type="entry name" value="PS_decarb_PSD_B_type1"/>
    <property type="match status" value="1"/>
</dbReference>
<dbReference type="InterPro" id="IPR003817">
    <property type="entry name" value="PS_Dcarbxylase"/>
</dbReference>
<dbReference type="InterPro" id="IPR033177">
    <property type="entry name" value="PSD-B"/>
</dbReference>
<dbReference type="InterPro" id="IPR033178">
    <property type="entry name" value="PSD_type1_pro"/>
</dbReference>
<dbReference type="NCBIfam" id="NF002853">
    <property type="entry name" value="PRK03140.1"/>
    <property type="match status" value="1"/>
</dbReference>
<dbReference type="NCBIfam" id="TIGR00163">
    <property type="entry name" value="PS_decarb"/>
    <property type="match status" value="1"/>
</dbReference>
<dbReference type="PANTHER" id="PTHR10067">
    <property type="entry name" value="PHOSPHATIDYLSERINE DECARBOXYLASE"/>
    <property type="match status" value="1"/>
</dbReference>
<dbReference type="PANTHER" id="PTHR10067:SF6">
    <property type="entry name" value="PHOSPHATIDYLSERINE DECARBOXYLASE PROENZYME, MITOCHONDRIAL"/>
    <property type="match status" value="1"/>
</dbReference>
<dbReference type="Pfam" id="PF02666">
    <property type="entry name" value="PS_Dcarbxylase"/>
    <property type="match status" value="1"/>
</dbReference>